<gene>
    <name type="primary">ATP16</name>
    <name type="ordered locus">YDL004W</name>
    <name type="ORF">D2935</name>
    <name type="ORF">YD8119.03</name>
</gene>
<reference key="1">
    <citation type="journal article" date="1994" name="Eur. J. Biochem.">
        <title>ATP synthase of yeast mitochondria. Isolation of the F1 delta subunit, sequence and disruption of the structural gene.</title>
        <authorList>
            <person name="Giraud M.-F."/>
            <person name="Velours J."/>
        </authorList>
    </citation>
    <scope>NUCLEOTIDE SEQUENCE [GENOMIC DNA]</scope>
    <scope>PROTEIN SEQUENCE OF 23-72; 112-121 AND 141-160</scope>
    <source>
        <strain>D273-10B/A</strain>
    </source>
</reference>
<reference key="2">
    <citation type="journal article" date="1997" name="Nature">
        <title>The nucleotide sequence of Saccharomyces cerevisiae chromosome IV.</title>
        <authorList>
            <person name="Jacq C."/>
            <person name="Alt-Moerbe J."/>
            <person name="Andre B."/>
            <person name="Arnold W."/>
            <person name="Bahr A."/>
            <person name="Ballesta J.P.G."/>
            <person name="Bargues M."/>
            <person name="Baron L."/>
            <person name="Becker A."/>
            <person name="Biteau N."/>
            <person name="Bloecker H."/>
            <person name="Blugeon C."/>
            <person name="Boskovic J."/>
            <person name="Brandt P."/>
            <person name="Brueckner M."/>
            <person name="Buitrago M.J."/>
            <person name="Coster F."/>
            <person name="Delaveau T."/>
            <person name="del Rey F."/>
            <person name="Dujon B."/>
            <person name="Eide L.G."/>
            <person name="Garcia-Cantalejo J.M."/>
            <person name="Goffeau A."/>
            <person name="Gomez-Peris A."/>
            <person name="Granotier C."/>
            <person name="Hanemann V."/>
            <person name="Hankeln T."/>
            <person name="Hoheisel J.D."/>
            <person name="Jaeger W."/>
            <person name="Jimenez A."/>
            <person name="Jonniaux J.-L."/>
            <person name="Kraemer C."/>
            <person name="Kuester H."/>
            <person name="Laamanen P."/>
            <person name="Legros Y."/>
            <person name="Louis E.J."/>
            <person name="Moeller-Rieker S."/>
            <person name="Monnet A."/>
            <person name="Moro M."/>
            <person name="Mueller-Auer S."/>
            <person name="Nussbaumer B."/>
            <person name="Paricio N."/>
            <person name="Paulin L."/>
            <person name="Perea J."/>
            <person name="Perez-Alonso M."/>
            <person name="Perez-Ortin J.E."/>
            <person name="Pohl T.M."/>
            <person name="Prydz H."/>
            <person name="Purnelle B."/>
            <person name="Rasmussen S.W."/>
            <person name="Remacha M.A."/>
            <person name="Revuelta J.L."/>
            <person name="Rieger M."/>
            <person name="Salom D."/>
            <person name="Saluz H.P."/>
            <person name="Saiz J.E."/>
            <person name="Saren A.-M."/>
            <person name="Schaefer M."/>
            <person name="Scharfe M."/>
            <person name="Schmidt E.R."/>
            <person name="Schneider C."/>
            <person name="Scholler P."/>
            <person name="Schwarz S."/>
            <person name="Soler-Mira A."/>
            <person name="Urrestarazu L.A."/>
            <person name="Verhasselt P."/>
            <person name="Vissers S."/>
            <person name="Voet M."/>
            <person name="Volckaert G."/>
            <person name="Wagner G."/>
            <person name="Wambutt R."/>
            <person name="Wedler E."/>
            <person name="Wedler H."/>
            <person name="Woelfl S."/>
            <person name="Harris D.E."/>
            <person name="Bowman S."/>
            <person name="Brown D."/>
            <person name="Churcher C.M."/>
            <person name="Connor R."/>
            <person name="Dedman K."/>
            <person name="Gentles S."/>
            <person name="Hamlin N."/>
            <person name="Hunt S."/>
            <person name="Jones L."/>
            <person name="McDonald S."/>
            <person name="Murphy L.D."/>
            <person name="Niblett D."/>
            <person name="Odell C."/>
            <person name="Oliver K."/>
            <person name="Rajandream M.A."/>
            <person name="Richards C."/>
            <person name="Shore L."/>
            <person name="Walsh S.V."/>
            <person name="Barrell B.G."/>
            <person name="Dietrich F.S."/>
            <person name="Mulligan J.T."/>
            <person name="Allen E."/>
            <person name="Araujo R."/>
            <person name="Aviles E."/>
            <person name="Berno A."/>
            <person name="Carpenter J."/>
            <person name="Chen E."/>
            <person name="Cherry J.M."/>
            <person name="Chung E."/>
            <person name="Duncan M."/>
            <person name="Hunicke-Smith S."/>
            <person name="Hyman R.W."/>
            <person name="Komp C."/>
            <person name="Lashkari D."/>
            <person name="Lew H."/>
            <person name="Lin D."/>
            <person name="Mosedale D."/>
            <person name="Nakahara K."/>
            <person name="Namath A."/>
            <person name="Oefner P."/>
            <person name="Oh C."/>
            <person name="Petel F.X."/>
            <person name="Roberts D."/>
            <person name="Schramm S."/>
            <person name="Schroeder M."/>
            <person name="Shogren T."/>
            <person name="Shroff N."/>
            <person name="Winant A."/>
            <person name="Yelton M.A."/>
            <person name="Botstein D."/>
            <person name="Davis R.W."/>
            <person name="Johnston M."/>
            <person name="Andrews S."/>
            <person name="Brinkman R."/>
            <person name="Cooper J."/>
            <person name="Ding H."/>
            <person name="Du Z."/>
            <person name="Favello A."/>
            <person name="Fulton L."/>
            <person name="Gattung S."/>
            <person name="Greco T."/>
            <person name="Hallsworth K."/>
            <person name="Hawkins J."/>
            <person name="Hillier L.W."/>
            <person name="Jier M."/>
            <person name="Johnson D."/>
            <person name="Johnston L."/>
            <person name="Kirsten J."/>
            <person name="Kucaba T."/>
            <person name="Langston Y."/>
            <person name="Latreille P."/>
            <person name="Le T."/>
            <person name="Mardis E."/>
            <person name="Menezes S."/>
            <person name="Miller N."/>
            <person name="Nhan M."/>
            <person name="Pauley A."/>
            <person name="Peluso D."/>
            <person name="Rifkin L."/>
            <person name="Riles L."/>
            <person name="Taich A."/>
            <person name="Trevaskis E."/>
            <person name="Vignati D."/>
            <person name="Wilcox L."/>
            <person name="Wohldman P."/>
            <person name="Vaudin M."/>
            <person name="Wilson R."/>
            <person name="Waterston R."/>
            <person name="Albermann K."/>
            <person name="Hani J."/>
            <person name="Heumann K."/>
            <person name="Kleine K."/>
            <person name="Mewes H.-W."/>
            <person name="Zollner A."/>
            <person name="Zaccaria P."/>
        </authorList>
    </citation>
    <scope>NUCLEOTIDE SEQUENCE [LARGE SCALE GENOMIC DNA]</scope>
    <source>
        <strain>ATCC 204508 / S288c</strain>
    </source>
</reference>
<reference key="3">
    <citation type="journal article" date="2014" name="G3 (Bethesda)">
        <title>The reference genome sequence of Saccharomyces cerevisiae: Then and now.</title>
        <authorList>
            <person name="Engel S.R."/>
            <person name="Dietrich F.S."/>
            <person name="Fisk D.G."/>
            <person name="Binkley G."/>
            <person name="Balakrishnan R."/>
            <person name="Costanzo M.C."/>
            <person name="Dwight S.S."/>
            <person name="Hitz B.C."/>
            <person name="Karra K."/>
            <person name="Nash R.S."/>
            <person name="Weng S."/>
            <person name="Wong E.D."/>
            <person name="Lloyd P."/>
            <person name="Skrzypek M.S."/>
            <person name="Miyasato S.R."/>
            <person name="Simison M."/>
            <person name="Cherry J.M."/>
        </authorList>
    </citation>
    <scope>GENOME REANNOTATION</scope>
    <source>
        <strain>ATCC 204508 / S288c</strain>
    </source>
</reference>
<reference key="4">
    <citation type="journal article" date="2007" name="Genome Res.">
        <title>Approaching a complete repository of sequence-verified protein-encoding clones for Saccharomyces cerevisiae.</title>
        <authorList>
            <person name="Hu Y."/>
            <person name="Rolfs A."/>
            <person name="Bhullar B."/>
            <person name="Murthy T.V.S."/>
            <person name="Zhu C."/>
            <person name="Berger M.F."/>
            <person name="Camargo A.A."/>
            <person name="Kelley F."/>
            <person name="McCarron S."/>
            <person name="Jepson D."/>
            <person name="Richardson A."/>
            <person name="Raphael J."/>
            <person name="Moreira D."/>
            <person name="Taycher E."/>
            <person name="Zuo D."/>
            <person name="Mohr S."/>
            <person name="Kane M.F."/>
            <person name="Williamson J."/>
            <person name="Simpson A.J.G."/>
            <person name="Bulyk M.L."/>
            <person name="Harlow E."/>
            <person name="Marsischky G."/>
            <person name="Kolodner R.D."/>
            <person name="LaBaer J."/>
        </authorList>
    </citation>
    <scope>NUCLEOTIDE SEQUENCE [GENOMIC DNA]</scope>
    <source>
        <strain>ATCC 204508 / S288c</strain>
    </source>
</reference>
<reference key="5">
    <citation type="journal article" date="2007" name="Mol. Cell. Proteomics">
        <title>Profiling phosphoproteins of yeast mitochondria reveals a role of phosphorylation in assembly of the ATP synthase.</title>
        <authorList>
            <person name="Reinders J."/>
            <person name="Wagner K."/>
            <person name="Zahedi R.P."/>
            <person name="Stojanovski D."/>
            <person name="Eyrich B."/>
            <person name="van der Laan M."/>
            <person name="Rehling P."/>
            <person name="Sickmann A."/>
            <person name="Pfanner N."/>
            <person name="Meisinger C."/>
        </authorList>
    </citation>
    <scope>IDENTIFICATION BY MASS SPECTROMETRY [LARGE SCALE ANALYSIS]</scope>
    <source>
        <strain>ATCC 76625 / YPH499</strain>
    </source>
</reference>
<reference key="6">
    <citation type="journal article" date="1999" name="Science">
        <title>Molecular architecture of the rotary motor in ATP synthase.</title>
        <authorList>
            <person name="Stock D."/>
            <person name="Leslie A.G."/>
            <person name="Walker J.E."/>
        </authorList>
    </citation>
    <scope>3D-STRUCTURE MODELING</scope>
    <scope>FUNCTION</scope>
    <scope>IDENTIFICATION IN THE F-TYPE ATPASE COMPLEX</scope>
    <scope>SUBCELLULAR LOCATION</scope>
</reference>
<comment type="function">
    <text evidence="1">Mitochondrial membrane ATP synthase (F(1)F(0) ATP synthase or Complex V) produces ATP from ADP in the presence of a proton gradient across the membrane which is generated by electron transport complexes of the respiratory chain. F-type ATPases consist of two structural domains, F(1) - containing the extramembraneous catalytic core, and F(0) - containing the membrane proton channel, linked together by a central stalk and a peripheral stalk. During catalysis, ATP turnover in the catalytic domain of F(1) is coupled via a rotary mechanism of the central stalk subunits to proton translocation. Part of the complex F(1) domain and of the central stalk which is part of the complex rotary element. Rotation of the central stalk against the surrounding alpha(3)beta(3) subunits leads to hydrolysis of ATP in three separate catalytic sites on the beta subunits.</text>
</comment>
<comment type="subunit">
    <text evidence="1">F-type ATPases have 2 components, CF(1) - the catalytic core - and CF(0) - the membrane proton channel. CF(1) has five subunits: alpha(3), beta(3), gamma(1), delta(1), epsilon(1). CF(0) has three main subunits: a, b and c.</text>
</comment>
<comment type="subcellular location">
    <subcellularLocation>
        <location>Mitochondrion</location>
    </subcellularLocation>
    <subcellularLocation>
        <location evidence="1">Mitochondrion inner membrane</location>
    </subcellularLocation>
</comment>
<comment type="similarity">
    <text evidence="3">Belongs to the ATPase epsilon chain family.</text>
</comment>
<keyword id="KW-0002">3D-structure</keyword>
<keyword id="KW-0066">ATP synthesis</keyword>
<keyword id="KW-0139">CF(1)</keyword>
<keyword id="KW-0903">Direct protein sequencing</keyword>
<keyword id="KW-0375">Hydrogen ion transport</keyword>
<keyword id="KW-0406">Ion transport</keyword>
<keyword id="KW-0472">Membrane</keyword>
<keyword id="KW-0496">Mitochondrion</keyword>
<keyword id="KW-0999">Mitochondrion inner membrane</keyword>
<keyword id="KW-1185">Reference proteome</keyword>
<keyword id="KW-0809">Transit peptide</keyword>
<keyword id="KW-0813">Transport</keyword>
<name>ATPD_YEAST</name>
<feature type="transit peptide" description="Mitochondrion" evidence="2">
    <location>
        <begin position="1"/>
        <end position="22"/>
    </location>
</feature>
<feature type="chain" id="PRO_0000002671" description="ATP synthase subunit delta, mitochondrial">
    <location>
        <begin position="23"/>
        <end position="160"/>
    </location>
</feature>
<feature type="strand" evidence="5">
    <location>
        <begin position="34"/>
        <end position="37"/>
    </location>
</feature>
<feature type="strand" evidence="4">
    <location>
        <begin position="44"/>
        <end position="46"/>
    </location>
</feature>
<feature type="strand" evidence="5">
    <location>
        <begin position="51"/>
        <end position="54"/>
    </location>
</feature>
<feature type="strand" evidence="5">
    <location>
        <begin position="56"/>
        <end position="59"/>
    </location>
</feature>
<feature type="strand" evidence="5">
    <location>
        <begin position="61"/>
        <end position="63"/>
    </location>
</feature>
<feature type="strand" evidence="5">
    <location>
        <begin position="70"/>
        <end position="74"/>
    </location>
</feature>
<feature type="strand" evidence="5">
    <location>
        <begin position="78"/>
        <end position="83"/>
    </location>
</feature>
<feature type="strand" evidence="5">
    <location>
        <begin position="86"/>
        <end position="92"/>
    </location>
</feature>
<feature type="strand" evidence="5">
    <location>
        <begin position="95"/>
        <end position="100"/>
    </location>
</feature>
<feature type="turn" evidence="5">
    <location>
        <begin position="101"/>
        <end position="103"/>
    </location>
</feature>
<feature type="strand" evidence="5">
    <location>
        <begin position="104"/>
        <end position="110"/>
    </location>
</feature>
<feature type="strand" evidence="4">
    <location>
        <begin position="112"/>
        <end position="114"/>
    </location>
</feature>
<feature type="helix" evidence="5">
    <location>
        <begin position="115"/>
        <end position="117"/>
    </location>
</feature>
<feature type="helix" evidence="5">
    <location>
        <begin position="120"/>
        <end position="133"/>
    </location>
</feature>
<feature type="strand" evidence="5">
    <location>
        <begin position="136"/>
        <end position="139"/>
    </location>
</feature>
<feature type="helix" evidence="5">
    <location>
        <begin position="140"/>
        <end position="156"/>
    </location>
</feature>
<proteinExistence type="evidence at protein level"/>
<dbReference type="EMBL" id="Z21857">
    <property type="protein sequence ID" value="CAA79912.1"/>
    <property type="molecule type" value="Genomic_DNA"/>
</dbReference>
<dbReference type="EMBL" id="Z48008">
    <property type="protein sequence ID" value="CAA88057.1"/>
    <property type="molecule type" value="Genomic_DNA"/>
</dbReference>
<dbReference type="EMBL" id="Z48432">
    <property type="protein sequence ID" value="CAA88355.1"/>
    <property type="molecule type" value="Genomic_DNA"/>
</dbReference>
<dbReference type="EMBL" id="Z74052">
    <property type="protein sequence ID" value="CAA98560.1"/>
    <property type="molecule type" value="Genomic_DNA"/>
</dbReference>
<dbReference type="EMBL" id="AY558155">
    <property type="protein sequence ID" value="AAS56481.1"/>
    <property type="molecule type" value="Genomic_DNA"/>
</dbReference>
<dbReference type="EMBL" id="BK006938">
    <property type="protein sequence ID" value="DAA11844.1"/>
    <property type="molecule type" value="Genomic_DNA"/>
</dbReference>
<dbReference type="PIR" id="S45632">
    <property type="entry name" value="S45632"/>
</dbReference>
<dbReference type="RefSeq" id="NP_010280.1">
    <property type="nucleotide sequence ID" value="NM_001180063.1"/>
</dbReference>
<dbReference type="PDB" id="2HLD">
    <property type="method" value="X-ray"/>
    <property type="resolution" value="2.80 A"/>
    <property type="chains" value="H/Q/Z=23-160"/>
</dbReference>
<dbReference type="PDB" id="2WPD">
    <property type="method" value="X-ray"/>
    <property type="resolution" value="3.43 A"/>
    <property type="chains" value="H=23-160"/>
</dbReference>
<dbReference type="PDB" id="2XOK">
    <property type="method" value="X-ray"/>
    <property type="resolution" value="3.01 A"/>
    <property type="chains" value="H=1-160"/>
</dbReference>
<dbReference type="PDB" id="3FKS">
    <property type="method" value="X-ray"/>
    <property type="resolution" value="3.59 A"/>
    <property type="chains" value="H/Q/Z=23-160"/>
</dbReference>
<dbReference type="PDB" id="3OE7">
    <property type="method" value="X-ray"/>
    <property type="resolution" value="3.19 A"/>
    <property type="chains" value="H/Q/Z=24-160"/>
</dbReference>
<dbReference type="PDB" id="3OEE">
    <property type="method" value="X-ray"/>
    <property type="resolution" value="2.74 A"/>
    <property type="chains" value="H/Q/Z=23-160"/>
</dbReference>
<dbReference type="PDB" id="3OEH">
    <property type="method" value="X-ray"/>
    <property type="resolution" value="3.00 A"/>
    <property type="chains" value="H/Q/Z=23-160"/>
</dbReference>
<dbReference type="PDB" id="3OFN">
    <property type="method" value="X-ray"/>
    <property type="resolution" value="3.20 A"/>
    <property type="chains" value="H/Q=23-160"/>
</dbReference>
<dbReference type="PDB" id="3ZIA">
    <property type="method" value="X-ray"/>
    <property type="resolution" value="2.50 A"/>
    <property type="chains" value="H/R=23-160"/>
</dbReference>
<dbReference type="PDB" id="3ZRY">
    <property type="method" value="X-ray"/>
    <property type="resolution" value="6.50 A"/>
    <property type="chains" value="H=23-160"/>
</dbReference>
<dbReference type="PDB" id="4B2Q">
    <property type="method" value="EM"/>
    <property type="resolution" value="37.00 A"/>
    <property type="chains" value="H/h=29-160"/>
</dbReference>
<dbReference type="PDB" id="6B8H">
    <property type="method" value="EM"/>
    <property type="resolution" value="3.60 A"/>
    <property type="chains" value="H/l=23-160"/>
</dbReference>
<dbReference type="PDB" id="6CP3">
    <property type="method" value="EM"/>
    <property type="resolution" value="3.80 A"/>
    <property type="chains" value="H=23-160"/>
</dbReference>
<dbReference type="PDB" id="6CP6">
    <property type="method" value="EM"/>
    <property type="resolution" value="3.60 A"/>
    <property type="chains" value="H=23-160"/>
</dbReference>
<dbReference type="PDB" id="7TJY">
    <property type="method" value="EM"/>
    <property type="resolution" value="3.80 A"/>
    <property type="chains" value="H=23-160"/>
</dbReference>
<dbReference type="PDB" id="7TJZ">
    <property type="method" value="EM"/>
    <property type="resolution" value="4.40 A"/>
    <property type="chains" value="H=23-160"/>
</dbReference>
<dbReference type="PDB" id="7TK0">
    <property type="method" value="EM"/>
    <property type="resolution" value="4.40 A"/>
    <property type="chains" value="H=23-160"/>
</dbReference>
<dbReference type="PDB" id="7TK1">
    <property type="method" value="EM"/>
    <property type="resolution" value="7.10 A"/>
    <property type="chains" value="H=23-160"/>
</dbReference>
<dbReference type="PDB" id="7TK2">
    <property type="method" value="EM"/>
    <property type="resolution" value="6.50 A"/>
    <property type="chains" value="H=23-160"/>
</dbReference>
<dbReference type="PDB" id="7TK3">
    <property type="method" value="EM"/>
    <property type="resolution" value="6.30 A"/>
    <property type="chains" value="H=23-160"/>
</dbReference>
<dbReference type="PDB" id="7TK4">
    <property type="method" value="EM"/>
    <property type="resolution" value="7.00 A"/>
    <property type="chains" value="H=23-160"/>
</dbReference>
<dbReference type="PDB" id="7TK5">
    <property type="method" value="EM"/>
    <property type="resolution" value="7.80 A"/>
    <property type="chains" value="H=23-160"/>
</dbReference>
<dbReference type="PDB" id="7TK6">
    <property type="method" value="EM"/>
    <property type="resolution" value="6.50 A"/>
    <property type="chains" value="H=23-160"/>
</dbReference>
<dbReference type="PDB" id="7TK7">
    <property type="method" value="EM"/>
    <property type="resolution" value="6.70 A"/>
    <property type="chains" value="H=23-160"/>
</dbReference>
<dbReference type="PDB" id="7TK8">
    <property type="method" value="EM"/>
    <property type="resolution" value="4.70 A"/>
    <property type="chains" value="H=23-160"/>
</dbReference>
<dbReference type="PDB" id="7TK9">
    <property type="method" value="EM"/>
    <property type="resolution" value="6.00 A"/>
    <property type="chains" value="H=23-160"/>
</dbReference>
<dbReference type="PDB" id="7TKA">
    <property type="method" value="EM"/>
    <property type="resolution" value="7.10 A"/>
    <property type="chains" value="H=23-160"/>
</dbReference>
<dbReference type="PDB" id="7TKB">
    <property type="method" value="EM"/>
    <property type="resolution" value="6.30 A"/>
    <property type="chains" value="H=23-160"/>
</dbReference>
<dbReference type="PDB" id="7TKC">
    <property type="method" value="EM"/>
    <property type="resolution" value="5.80 A"/>
    <property type="chains" value="H=23-160"/>
</dbReference>
<dbReference type="PDB" id="7TKD">
    <property type="method" value="EM"/>
    <property type="resolution" value="7.70 A"/>
    <property type="chains" value="H=23-160"/>
</dbReference>
<dbReference type="PDB" id="7TKE">
    <property type="method" value="EM"/>
    <property type="resolution" value="7.10 A"/>
    <property type="chains" value="H=23-160"/>
</dbReference>
<dbReference type="PDB" id="7TKF">
    <property type="method" value="EM"/>
    <property type="resolution" value="7.10 A"/>
    <property type="chains" value="H=23-160"/>
</dbReference>
<dbReference type="PDB" id="7TKG">
    <property type="method" value="EM"/>
    <property type="resolution" value="4.50 A"/>
    <property type="chains" value="H=23-160"/>
</dbReference>
<dbReference type="PDB" id="7TKH">
    <property type="method" value="EM"/>
    <property type="resolution" value="4.40 A"/>
    <property type="chains" value="H=23-160"/>
</dbReference>
<dbReference type="PDB" id="7TKI">
    <property type="method" value="EM"/>
    <property type="resolution" value="7.10 A"/>
    <property type="chains" value="H=23-160"/>
</dbReference>
<dbReference type="PDB" id="7TKJ">
    <property type="method" value="EM"/>
    <property type="resolution" value="7.50 A"/>
    <property type="chains" value="H=23-160"/>
</dbReference>
<dbReference type="PDB" id="7TKK">
    <property type="method" value="EM"/>
    <property type="resolution" value="7.30 A"/>
    <property type="chains" value="H=23-160"/>
</dbReference>
<dbReference type="PDB" id="7TKL">
    <property type="method" value="EM"/>
    <property type="resolution" value="6.40 A"/>
    <property type="chains" value="H=23-160"/>
</dbReference>
<dbReference type="PDB" id="7TKM">
    <property type="method" value="EM"/>
    <property type="resolution" value="4.50 A"/>
    <property type="chains" value="H=23-160"/>
</dbReference>
<dbReference type="PDB" id="7TKN">
    <property type="method" value="EM"/>
    <property type="resolution" value="7.10 A"/>
    <property type="chains" value="H=23-160"/>
</dbReference>
<dbReference type="PDB" id="7TKO">
    <property type="method" value="EM"/>
    <property type="resolution" value="4.80 A"/>
    <property type="chains" value="H=23-160"/>
</dbReference>
<dbReference type="PDB" id="7TKP">
    <property type="method" value="EM"/>
    <property type="resolution" value="4.60 A"/>
    <property type="chains" value="H=23-160"/>
</dbReference>
<dbReference type="PDB" id="7TKQ">
    <property type="method" value="EM"/>
    <property type="resolution" value="4.50 A"/>
    <property type="chains" value="H=23-160"/>
</dbReference>
<dbReference type="PDB" id="7TKR">
    <property type="method" value="EM"/>
    <property type="resolution" value="6.50 A"/>
    <property type="chains" value="H=23-160"/>
</dbReference>
<dbReference type="PDB" id="7TKS">
    <property type="method" value="EM"/>
    <property type="resolution" value="7.50 A"/>
    <property type="chains" value="H=23-160"/>
</dbReference>
<dbReference type="PDB" id="8F29">
    <property type="method" value="EM"/>
    <property type="resolution" value="4.00 A"/>
    <property type="chains" value="H=29-160"/>
</dbReference>
<dbReference type="PDB" id="8F39">
    <property type="method" value="EM"/>
    <property type="resolution" value="3.50 A"/>
    <property type="chains" value="H=29-160"/>
</dbReference>
<dbReference type="PDB" id="8FKJ">
    <property type="method" value="EM"/>
    <property type="resolution" value="4.20 A"/>
    <property type="chains" value="H=29-160"/>
</dbReference>
<dbReference type="PDB" id="8FL8">
    <property type="method" value="EM"/>
    <property type="resolution" value="4.20 A"/>
    <property type="chains" value="H=29-160"/>
</dbReference>
<dbReference type="PDBsum" id="2HLD"/>
<dbReference type="PDBsum" id="2WPD"/>
<dbReference type="PDBsum" id="2XOK"/>
<dbReference type="PDBsum" id="3FKS"/>
<dbReference type="PDBsum" id="3OE7"/>
<dbReference type="PDBsum" id="3OEE"/>
<dbReference type="PDBsum" id="3OEH"/>
<dbReference type="PDBsum" id="3OFN"/>
<dbReference type="PDBsum" id="3ZIA"/>
<dbReference type="PDBsum" id="3ZRY"/>
<dbReference type="PDBsum" id="4B2Q"/>
<dbReference type="PDBsum" id="6B8H"/>
<dbReference type="PDBsum" id="6CP3"/>
<dbReference type="PDBsum" id="6CP6"/>
<dbReference type="PDBsum" id="7TJY"/>
<dbReference type="PDBsum" id="7TJZ"/>
<dbReference type="PDBsum" id="7TK0"/>
<dbReference type="PDBsum" id="7TK1"/>
<dbReference type="PDBsum" id="7TK2"/>
<dbReference type="PDBsum" id="7TK3"/>
<dbReference type="PDBsum" id="7TK4"/>
<dbReference type="PDBsum" id="7TK5"/>
<dbReference type="PDBsum" id="7TK6"/>
<dbReference type="PDBsum" id="7TK7"/>
<dbReference type="PDBsum" id="7TK8"/>
<dbReference type="PDBsum" id="7TK9"/>
<dbReference type="PDBsum" id="7TKA"/>
<dbReference type="PDBsum" id="7TKB"/>
<dbReference type="PDBsum" id="7TKC"/>
<dbReference type="PDBsum" id="7TKD"/>
<dbReference type="PDBsum" id="7TKE"/>
<dbReference type="PDBsum" id="7TKF"/>
<dbReference type="PDBsum" id="7TKG"/>
<dbReference type="PDBsum" id="7TKH"/>
<dbReference type="PDBsum" id="7TKI"/>
<dbReference type="PDBsum" id="7TKJ"/>
<dbReference type="PDBsum" id="7TKK"/>
<dbReference type="PDBsum" id="7TKL"/>
<dbReference type="PDBsum" id="7TKM"/>
<dbReference type="PDBsum" id="7TKN"/>
<dbReference type="PDBsum" id="7TKO"/>
<dbReference type="PDBsum" id="7TKP"/>
<dbReference type="PDBsum" id="7TKQ"/>
<dbReference type="PDBsum" id="7TKR"/>
<dbReference type="PDBsum" id="7TKS"/>
<dbReference type="PDBsum" id="8F29"/>
<dbReference type="PDBsum" id="8F39"/>
<dbReference type="PDBsum" id="8FKJ"/>
<dbReference type="PDBsum" id="8FL8"/>
<dbReference type="EMDB" id="EMD-25946"/>
<dbReference type="EMDB" id="EMD-25947"/>
<dbReference type="EMDB" id="EMD-25948"/>
<dbReference type="EMDB" id="EMD-25949"/>
<dbReference type="EMDB" id="EMD-25954"/>
<dbReference type="EMDB" id="EMD-25955"/>
<dbReference type="EMDB" id="EMD-25956"/>
<dbReference type="EMDB" id="EMD-25957"/>
<dbReference type="EMDB" id="EMD-25958"/>
<dbReference type="EMDB" id="EMD-25959"/>
<dbReference type="EMDB" id="EMD-25960"/>
<dbReference type="EMDB" id="EMD-25961"/>
<dbReference type="EMDB" id="EMD-25962"/>
<dbReference type="EMDB" id="EMD-25963"/>
<dbReference type="EMDB" id="EMD-25964"/>
<dbReference type="EMDB" id="EMD-25965"/>
<dbReference type="EMDB" id="EMD-25966"/>
<dbReference type="EMDB" id="EMD-25967"/>
<dbReference type="EMDB" id="EMD-25968"/>
<dbReference type="EMDB" id="EMD-25969"/>
<dbReference type="EMDB" id="EMD-25970"/>
<dbReference type="EMDB" id="EMD-25971"/>
<dbReference type="EMDB" id="EMD-25972"/>
<dbReference type="EMDB" id="EMD-25973"/>
<dbReference type="EMDB" id="EMD-25974"/>
<dbReference type="EMDB" id="EMD-25975"/>
<dbReference type="EMDB" id="EMD-25976"/>
<dbReference type="EMDB" id="EMD-25977"/>
<dbReference type="EMDB" id="EMD-25978"/>
<dbReference type="EMDB" id="EMD-25979"/>
<dbReference type="EMDB" id="EMD-25980"/>
<dbReference type="EMDB" id="EMD-28809"/>
<dbReference type="EMDB" id="EMD-28835"/>
<dbReference type="EMDB" id="EMD-29250"/>
<dbReference type="EMDB" id="EMD-29270"/>
<dbReference type="EMDB" id="EMD-7546"/>
<dbReference type="EMDB" id="EMD-7548"/>
<dbReference type="SMR" id="Q12165"/>
<dbReference type="BioGRID" id="32050">
    <property type="interactions" value="32"/>
</dbReference>
<dbReference type="ComplexPortal" id="CPX-3281">
    <property type="entry name" value="Mitochondrial proton-transporting ATP synthase complex"/>
</dbReference>
<dbReference type="DIP" id="DIP-3032N"/>
<dbReference type="FunCoup" id="Q12165">
    <property type="interactions" value="933"/>
</dbReference>
<dbReference type="IntAct" id="Q12165">
    <property type="interactions" value="16"/>
</dbReference>
<dbReference type="MINT" id="Q12165"/>
<dbReference type="STRING" id="4932.YDL004W"/>
<dbReference type="TCDB" id="3.A.2.1.3">
    <property type="family name" value="the h+- or na+-translocating f-type, v-type and a-type atpase (f-atpase) superfamily"/>
</dbReference>
<dbReference type="iPTMnet" id="Q12165"/>
<dbReference type="PaxDb" id="4932-YDL004W"/>
<dbReference type="PeptideAtlas" id="Q12165"/>
<dbReference type="EnsemblFungi" id="YDL004W_mRNA">
    <property type="protein sequence ID" value="YDL004W"/>
    <property type="gene ID" value="YDL004W"/>
</dbReference>
<dbReference type="GeneID" id="851560"/>
<dbReference type="KEGG" id="sce:YDL004W"/>
<dbReference type="AGR" id="SGD:S000002162"/>
<dbReference type="SGD" id="S000002162">
    <property type="gene designation" value="ATP16"/>
</dbReference>
<dbReference type="VEuPathDB" id="FungiDB:YDL004W"/>
<dbReference type="eggNOG" id="KOG1758">
    <property type="taxonomic scope" value="Eukaryota"/>
</dbReference>
<dbReference type="GeneTree" id="ENSGT00390000017576"/>
<dbReference type="HOGENOM" id="CLU_084338_0_0_1"/>
<dbReference type="InParanoid" id="Q12165"/>
<dbReference type="OMA" id="HQTLYSE"/>
<dbReference type="OrthoDB" id="270171at2759"/>
<dbReference type="BioCyc" id="YEAST:G3O-29435-MONOMER"/>
<dbReference type="BioGRID-ORCS" id="851560">
    <property type="hits" value="6 hits in 10 CRISPR screens"/>
</dbReference>
<dbReference type="EvolutionaryTrace" id="Q12165"/>
<dbReference type="PRO" id="PR:Q12165"/>
<dbReference type="Proteomes" id="UP000002311">
    <property type="component" value="Chromosome IV"/>
</dbReference>
<dbReference type="RNAct" id="Q12165">
    <property type="molecule type" value="protein"/>
</dbReference>
<dbReference type="GO" id="GO:0005743">
    <property type="term" value="C:mitochondrial inner membrane"/>
    <property type="evidence" value="ECO:0000314"/>
    <property type="project" value="ComplexPortal"/>
</dbReference>
<dbReference type="GO" id="GO:0005739">
    <property type="term" value="C:mitochondrion"/>
    <property type="evidence" value="ECO:0007005"/>
    <property type="project" value="SGD"/>
</dbReference>
<dbReference type="GO" id="GO:0045259">
    <property type="term" value="C:proton-transporting ATP synthase complex"/>
    <property type="evidence" value="ECO:0000314"/>
    <property type="project" value="SGD"/>
</dbReference>
<dbReference type="GO" id="GO:0046933">
    <property type="term" value="F:proton-transporting ATP synthase activity, rotational mechanism"/>
    <property type="evidence" value="ECO:0007669"/>
    <property type="project" value="InterPro"/>
</dbReference>
<dbReference type="GO" id="GO:0015986">
    <property type="term" value="P:proton motive force-driven ATP synthesis"/>
    <property type="evidence" value="ECO:0000314"/>
    <property type="project" value="ComplexPortal"/>
</dbReference>
<dbReference type="CDD" id="cd12152">
    <property type="entry name" value="F1-ATPase_delta"/>
    <property type="match status" value="1"/>
</dbReference>
<dbReference type="FunFam" id="2.60.15.10:FF:000003">
    <property type="entry name" value="ATP synthase subunit delta, mitochondrial"/>
    <property type="match status" value="1"/>
</dbReference>
<dbReference type="Gene3D" id="6.10.140.880">
    <property type="match status" value="1"/>
</dbReference>
<dbReference type="Gene3D" id="2.60.15.10">
    <property type="entry name" value="F0F1 ATP synthase delta/epsilon subunit, N-terminal"/>
    <property type="match status" value="1"/>
</dbReference>
<dbReference type="HAMAP" id="MF_00530">
    <property type="entry name" value="ATP_synth_epsil_bac"/>
    <property type="match status" value="1"/>
</dbReference>
<dbReference type="InterPro" id="IPR001469">
    <property type="entry name" value="ATP_synth_F1_dsu/esu"/>
</dbReference>
<dbReference type="InterPro" id="IPR020546">
    <property type="entry name" value="ATP_synth_F1_dsu/esu_N"/>
</dbReference>
<dbReference type="InterPro" id="IPR048938">
    <property type="entry name" value="ATPD_C_fung"/>
</dbReference>
<dbReference type="InterPro" id="IPR036771">
    <property type="entry name" value="ATPsynth_dsu/esu_N"/>
</dbReference>
<dbReference type="PANTHER" id="PTHR13822">
    <property type="entry name" value="ATP SYNTHASE DELTA/EPSILON CHAIN"/>
    <property type="match status" value="1"/>
</dbReference>
<dbReference type="PANTHER" id="PTHR13822:SF7">
    <property type="entry name" value="ATP SYNTHASE SUBUNIT DELTA, MITOCHONDRIAL"/>
    <property type="match status" value="1"/>
</dbReference>
<dbReference type="Pfam" id="PF02823">
    <property type="entry name" value="ATP-synt_DE_N"/>
    <property type="match status" value="1"/>
</dbReference>
<dbReference type="Pfam" id="PF21334">
    <property type="entry name" value="ATPD_C_fung"/>
    <property type="match status" value="1"/>
</dbReference>
<dbReference type="SUPFAM" id="SSF51344">
    <property type="entry name" value="Epsilon subunit of F1F0-ATP synthase N-terminal domain"/>
    <property type="match status" value="1"/>
</dbReference>
<evidence type="ECO:0000269" key="1">
    <source>
    </source>
</evidence>
<evidence type="ECO:0000269" key="2">
    <source>
    </source>
</evidence>
<evidence type="ECO:0000305" key="3"/>
<evidence type="ECO:0007829" key="4">
    <source>
        <dbReference type="PDB" id="3OFN"/>
    </source>
</evidence>
<evidence type="ECO:0007829" key="5">
    <source>
        <dbReference type="PDB" id="3ZIA"/>
    </source>
</evidence>
<protein>
    <recommendedName>
        <fullName>ATP synthase subunit delta, mitochondrial</fullName>
    </recommendedName>
    <alternativeName>
        <fullName>F-ATPase delta subunit</fullName>
    </alternativeName>
</protein>
<sequence>MLRSIIGKSASRSLNFVAKRSYAEAAAASSGLKLQFALPHETLYSGSEVTQVNLPAKSGRIGVLANHVPTVEQLLPGVVEVMEGSNSKKFFISGGFATVQPDSQLCVTAIEAFPLESFSQENIKNLLAEAKKNVSSSDAREAAEAAIQVEVLENLQSVLK</sequence>
<accession>Q12165</accession>
<accession>D6VRY4</accession>
<organism>
    <name type="scientific">Saccharomyces cerevisiae (strain ATCC 204508 / S288c)</name>
    <name type="common">Baker's yeast</name>
    <dbReference type="NCBI Taxonomy" id="559292"/>
    <lineage>
        <taxon>Eukaryota</taxon>
        <taxon>Fungi</taxon>
        <taxon>Dikarya</taxon>
        <taxon>Ascomycota</taxon>
        <taxon>Saccharomycotina</taxon>
        <taxon>Saccharomycetes</taxon>
        <taxon>Saccharomycetales</taxon>
        <taxon>Saccharomycetaceae</taxon>
        <taxon>Saccharomyces</taxon>
    </lineage>
</organism>